<comment type="function">
    <text evidence="1 3">Plant non-specific lipid-transfer proteins transfer phospholipids as well as galactolipids across membranes (By similarity). May play a role in wax or cutin deposition in the cell walls of expanding epidermal cells and certain secretory tissues (By similarity). Binds to both saturated and unsaturated lipids, with the highest binding efficiency for linoleic acid, followed by linolenic acid (PubMed:33277525).</text>
</comment>
<comment type="tissue specificity">
    <text evidence="3">Expressed in seeds (at protein level).</text>
</comment>
<comment type="mass spectrometry"/>
<comment type="similarity">
    <text evidence="5">Belongs to the plant LTP family.</text>
</comment>
<reference evidence="5" key="1">
    <citation type="journal article" date="2020" name="Sci. Rep.">
        <title>Structural characterization and in vitro lipid binding studies of non-specific lipid transfer protein 1 (nsLTP1) from fennel (Foeniculum vulgare) seeds.</title>
        <authorList>
            <person name="Megeressa M."/>
            <person name="Siraj B."/>
            <person name="Zarina S."/>
            <person name="Ahmed A."/>
        </authorList>
    </citation>
    <scope>PROTEIN SEQUENCE</scope>
    <scope>FUNCTION</scope>
    <scope>TISSUE SPECIFICITY</scope>
    <scope>MASS SPECTROMETRY</scope>
    <source>
        <tissue evidence="4">Seed</tissue>
    </source>
</reference>
<feature type="chain" id="PRO_0000452471" description="Non-specific lipid-transfer protein 1">
    <location>
        <begin position="1"/>
        <end position="91"/>
    </location>
</feature>
<feature type="disulfide bond" evidence="2">
    <location>
        <begin position="4"/>
        <end position="51"/>
    </location>
</feature>
<feature type="disulfide bond" evidence="2">
    <location>
        <begin position="14"/>
        <end position="28"/>
    </location>
</feature>
<feature type="disulfide bond" evidence="2">
    <location>
        <begin position="29"/>
        <end position="74"/>
    </location>
</feature>
<feature type="disulfide bond" evidence="2">
    <location>
        <begin position="49"/>
        <end position="88"/>
    </location>
</feature>
<dbReference type="SMR" id="C0HLP9"/>
<dbReference type="GO" id="GO:0008289">
    <property type="term" value="F:lipid binding"/>
    <property type="evidence" value="ECO:0007669"/>
    <property type="project" value="UniProtKB-KW"/>
</dbReference>
<dbReference type="GO" id="GO:0006869">
    <property type="term" value="P:lipid transport"/>
    <property type="evidence" value="ECO:0007669"/>
    <property type="project" value="InterPro"/>
</dbReference>
<dbReference type="CDD" id="cd01960">
    <property type="entry name" value="nsLTP1"/>
    <property type="match status" value="1"/>
</dbReference>
<dbReference type="Gene3D" id="1.10.110.10">
    <property type="entry name" value="Plant lipid-transfer and hydrophobic proteins"/>
    <property type="match status" value="1"/>
</dbReference>
<dbReference type="InterPro" id="IPR036312">
    <property type="entry name" value="Bifun_inhib/LTP/seed_sf"/>
</dbReference>
<dbReference type="InterPro" id="IPR016140">
    <property type="entry name" value="Bifunc_inhib/LTP/seed_store"/>
</dbReference>
<dbReference type="InterPro" id="IPR000528">
    <property type="entry name" value="Plant_nsLTP"/>
</dbReference>
<dbReference type="PANTHER" id="PTHR33076">
    <property type="entry name" value="NON-SPECIFIC LIPID-TRANSFER PROTEIN 2-RELATED"/>
    <property type="match status" value="1"/>
</dbReference>
<dbReference type="Pfam" id="PF00234">
    <property type="entry name" value="Tryp_alpha_amyl"/>
    <property type="match status" value="1"/>
</dbReference>
<dbReference type="PRINTS" id="PR00382">
    <property type="entry name" value="LIPIDTRNSFER"/>
</dbReference>
<dbReference type="SMART" id="SM00499">
    <property type="entry name" value="AAI"/>
    <property type="match status" value="1"/>
</dbReference>
<dbReference type="SUPFAM" id="SSF47699">
    <property type="entry name" value="Bifunctional inhibitor/lipid-transfer protein/seed storage 2S albumin"/>
    <property type="match status" value="1"/>
</dbReference>
<dbReference type="PROSITE" id="PS00597">
    <property type="entry name" value="PLANT_LTP"/>
    <property type="match status" value="1"/>
</dbReference>
<accession>C0HLP9</accession>
<evidence type="ECO:0000250" key="1">
    <source>
        <dbReference type="UniProtKB" id="C0HLG2"/>
    </source>
</evidence>
<evidence type="ECO:0000250" key="2">
    <source>
        <dbReference type="UniProtKB" id="Q42952"/>
    </source>
</evidence>
<evidence type="ECO:0000269" key="3">
    <source>
    </source>
</evidence>
<evidence type="ECO:0000303" key="4">
    <source>
    </source>
</evidence>
<evidence type="ECO:0000305" key="5"/>
<organism evidence="4">
    <name type="scientific">Foeniculum vulgare</name>
    <name type="common">Fennel</name>
    <name type="synonym">Foeniculum officinale</name>
    <dbReference type="NCBI Taxonomy" id="2849586"/>
    <lineage>
        <taxon>Eukaryota</taxon>
        <taxon>Viridiplantae</taxon>
        <taxon>Streptophyta</taxon>
        <taxon>Embryophyta</taxon>
        <taxon>Tracheophyta</taxon>
        <taxon>Spermatophyta</taxon>
        <taxon>Magnoliopsida</taxon>
        <taxon>eudicotyledons</taxon>
        <taxon>Gunneridae</taxon>
        <taxon>Pentapetalae</taxon>
        <taxon>asterids</taxon>
        <taxon>campanulids</taxon>
        <taxon>Apiales</taxon>
        <taxon>Apiaceae</taxon>
        <taxon>Apioideae</taxon>
        <taxon>apioid superclade</taxon>
        <taxon>Apieae</taxon>
        <taxon>Anethum</taxon>
    </lineage>
</organism>
<keyword id="KW-0903">Direct protein sequencing</keyword>
<keyword id="KW-1015">Disulfide bond</keyword>
<keyword id="KW-0446">Lipid-binding</keyword>
<keyword id="KW-0813">Transport</keyword>
<sequence>AIDCKTVDAALVPCVPYLTGGGTPTTQCCSGVSSIKTMAGTPQDKKDACNCVKAAANRYPNIRDDVAQALPVKCNVQLDIPVSRTTNCDAI</sequence>
<proteinExistence type="evidence at protein level"/>
<name>NLTP1_FOEVU</name>
<protein>
    <recommendedName>
        <fullName evidence="4">Non-specific lipid-transfer protein 1</fullName>
        <shortName evidence="5">FvLTP1</shortName>
        <shortName evidence="4">nsLTP</shortName>
    </recommendedName>
</protein>